<accession>Q97KS6</accession>
<gene>
    <name evidence="1" type="primary">potA</name>
    <name type="ordered locus">CA_C0840</name>
</gene>
<keyword id="KW-0067">ATP-binding</keyword>
<keyword id="KW-1003">Cell membrane</keyword>
<keyword id="KW-0472">Membrane</keyword>
<keyword id="KW-0547">Nucleotide-binding</keyword>
<keyword id="KW-1185">Reference proteome</keyword>
<keyword id="KW-1278">Translocase</keyword>
<keyword id="KW-0813">Transport</keyword>
<feature type="chain" id="PRO_0000286204" description="Spermidine/putrescine import ATP-binding protein PotA">
    <location>
        <begin position="1"/>
        <end position="352"/>
    </location>
</feature>
<feature type="domain" description="ABC transporter" evidence="1">
    <location>
        <begin position="7"/>
        <end position="237"/>
    </location>
</feature>
<feature type="binding site" evidence="1">
    <location>
        <begin position="39"/>
        <end position="46"/>
    </location>
    <ligand>
        <name>ATP</name>
        <dbReference type="ChEBI" id="CHEBI:30616"/>
    </ligand>
</feature>
<name>POTA_CLOAB</name>
<reference key="1">
    <citation type="journal article" date="2001" name="J. Bacteriol.">
        <title>Genome sequence and comparative analysis of the solvent-producing bacterium Clostridium acetobutylicum.</title>
        <authorList>
            <person name="Noelling J."/>
            <person name="Breton G."/>
            <person name="Omelchenko M.V."/>
            <person name="Makarova K.S."/>
            <person name="Zeng Q."/>
            <person name="Gibson R."/>
            <person name="Lee H.M."/>
            <person name="Dubois J."/>
            <person name="Qiu D."/>
            <person name="Hitti J."/>
            <person name="Wolf Y.I."/>
            <person name="Tatusov R.L."/>
            <person name="Sabathe F."/>
            <person name="Doucette-Stamm L.A."/>
            <person name="Soucaille P."/>
            <person name="Daly M.J."/>
            <person name="Bennett G.N."/>
            <person name="Koonin E.V."/>
            <person name="Smith D.R."/>
        </authorList>
    </citation>
    <scope>NUCLEOTIDE SEQUENCE [LARGE SCALE GENOMIC DNA]</scope>
    <source>
        <strain>ATCC 824 / DSM 792 / JCM 1419 / IAM 19013 / LMG 5710 / NBRC 13948 / NRRL B-527 / VKM B-1787 / 2291 / W</strain>
    </source>
</reference>
<sequence>MEKDILIELKNVSKKYGENYVIKNLNLFVRRNEFLTFLGPSGCGKTTTLNMIAGFETPDEGNIIFEDSSINIVPPHKRQINTVFQKYALFSHMNVYENVAFGLRIKKLPEKQIREEVEKMLSLVDLKGFEKRSTDSLSGGQQQRVAIARALVNKPKLLLLDEPLGALDLKLRKEMQLELKNIQQKLGITFIFVTHDQEEALTMSDTIVVLNKGTVQQIGTPEDIYNEPKNKFVANFIGVSNILNGVMLHDYKVKFDDETFDCVDTGFNENEDVDVVVRPEDIKIVSKENGKLFGKVISAVFRGVHYEIKVEVKNTTWIIHNTKHVRVGDSIGLDILPDDIHIMRKEKIDEEA</sequence>
<protein>
    <recommendedName>
        <fullName evidence="1">Spermidine/putrescine import ATP-binding protein PotA</fullName>
        <ecNumber evidence="1">7.6.2.11</ecNumber>
    </recommendedName>
</protein>
<comment type="function">
    <text evidence="1">Part of the ABC transporter complex PotABCD involved in spermidine/putrescine import. Responsible for energy coupling to the transport system.</text>
</comment>
<comment type="catalytic activity">
    <reaction evidence="1">
        <text>ATP + H2O + polyamine-[polyamine-binding protein]Side 1 = ADP + phosphate + polyamineSide 2 + [polyamine-binding protein]Side 1.</text>
        <dbReference type="EC" id="7.6.2.11"/>
    </reaction>
</comment>
<comment type="subunit">
    <text evidence="1">The complex is composed of two ATP-binding proteins (PotA), two transmembrane proteins (PotB and PotC) and a solute-binding protein (PotD).</text>
</comment>
<comment type="subcellular location">
    <subcellularLocation>
        <location evidence="1">Cell membrane</location>
        <topology evidence="1">Peripheral membrane protein</topology>
    </subcellularLocation>
</comment>
<comment type="similarity">
    <text evidence="1">Belongs to the ABC transporter superfamily. Spermidine/putrescine importer (TC 3.A.1.11.1) family.</text>
</comment>
<evidence type="ECO:0000255" key="1">
    <source>
        <dbReference type="HAMAP-Rule" id="MF_01726"/>
    </source>
</evidence>
<dbReference type="EC" id="7.6.2.11" evidence="1"/>
<dbReference type="EMBL" id="AE001437">
    <property type="protein sequence ID" value="AAK78816.1"/>
    <property type="molecule type" value="Genomic_DNA"/>
</dbReference>
<dbReference type="PIR" id="E97003">
    <property type="entry name" value="E97003"/>
</dbReference>
<dbReference type="RefSeq" id="NP_347476.1">
    <property type="nucleotide sequence ID" value="NC_003030.1"/>
</dbReference>
<dbReference type="RefSeq" id="WP_010964158.1">
    <property type="nucleotide sequence ID" value="NC_003030.1"/>
</dbReference>
<dbReference type="SMR" id="Q97KS6"/>
<dbReference type="STRING" id="272562.CA_C0840"/>
<dbReference type="GeneID" id="44997350"/>
<dbReference type="KEGG" id="cac:CA_C0840"/>
<dbReference type="PATRIC" id="fig|272562.8.peg.1045"/>
<dbReference type="eggNOG" id="COG3842">
    <property type="taxonomic scope" value="Bacteria"/>
</dbReference>
<dbReference type="HOGENOM" id="CLU_000604_1_1_9"/>
<dbReference type="OrthoDB" id="9802264at2"/>
<dbReference type="Proteomes" id="UP000000814">
    <property type="component" value="Chromosome"/>
</dbReference>
<dbReference type="GO" id="GO:0043190">
    <property type="term" value="C:ATP-binding cassette (ABC) transporter complex"/>
    <property type="evidence" value="ECO:0007669"/>
    <property type="project" value="InterPro"/>
</dbReference>
<dbReference type="GO" id="GO:0015594">
    <property type="term" value="F:ABC-type putrescine transporter activity"/>
    <property type="evidence" value="ECO:0007669"/>
    <property type="project" value="InterPro"/>
</dbReference>
<dbReference type="GO" id="GO:0005524">
    <property type="term" value="F:ATP binding"/>
    <property type="evidence" value="ECO:0007669"/>
    <property type="project" value="UniProtKB-KW"/>
</dbReference>
<dbReference type="GO" id="GO:0016887">
    <property type="term" value="F:ATP hydrolysis activity"/>
    <property type="evidence" value="ECO:0007669"/>
    <property type="project" value="InterPro"/>
</dbReference>
<dbReference type="CDD" id="cd03300">
    <property type="entry name" value="ABC_PotA_N"/>
    <property type="match status" value="1"/>
</dbReference>
<dbReference type="FunFam" id="3.40.50.300:FF:000133">
    <property type="entry name" value="Spermidine/putrescine import ATP-binding protein PotA"/>
    <property type="match status" value="1"/>
</dbReference>
<dbReference type="Gene3D" id="2.40.50.100">
    <property type="match status" value="1"/>
</dbReference>
<dbReference type="Gene3D" id="2.40.50.140">
    <property type="entry name" value="Nucleic acid-binding proteins"/>
    <property type="match status" value="1"/>
</dbReference>
<dbReference type="Gene3D" id="3.40.50.300">
    <property type="entry name" value="P-loop containing nucleotide triphosphate hydrolases"/>
    <property type="match status" value="1"/>
</dbReference>
<dbReference type="InterPro" id="IPR003593">
    <property type="entry name" value="AAA+_ATPase"/>
</dbReference>
<dbReference type="InterPro" id="IPR050093">
    <property type="entry name" value="ABC_SmlMolc_Importer"/>
</dbReference>
<dbReference type="InterPro" id="IPR003439">
    <property type="entry name" value="ABC_transporter-like_ATP-bd"/>
</dbReference>
<dbReference type="InterPro" id="IPR017871">
    <property type="entry name" value="ABC_transporter-like_CS"/>
</dbReference>
<dbReference type="InterPro" id="IPR008995">
    <property type="entry name" value="Mo/tungstate-bd_C_term_dom"/>
</dbReference>
<dbReference type="InterPro" id="IPR012340">
    <property type="entry name" value="NA-bd_OB-fold"/>
</dbReference>
<dbReference type="InterPro" id="IPR027417">
    <property type="entry name" value="P-loop_NTPase"/>
</dbReference>
<dbReference type="InterPro" id="IPR005893">
    <property type="entry name" value="PotA-like"/>
</dbReference>
<dbReference type="InterPro" id="IPR017879">
    <property type="entry name" value="PotA_ATP-bd"/>
</dbReference>
<dbReference type="InterPro" id="IPR013611">
    <property type="entry name" value="Transp-assoc_OB_typ2"/>
</dbReference>
<dbReference type="NCBIfam" id="NF043075">
    <property type="entry name" value="MMSYN1_0197"/>
    <property type="match status" value="1"/>
</dbReference>
<dbReference type="NCBIfam" id="TIGR01187">
    <property type="entry name" value="potA"/>
    <property type="match status" value="1"/>
</dbReference>
<dbReference type="PANTHER" id="PTHR42781">
    <property type="entry name" value="SPERMIDINE/PUTRESCINE IMPORT ATP-BINDING PROTEIN POTA"/>
    <property type="match status" value="1"/>
</dbReference>
<dbReference type="PANTHER" id="PTHR42781:SF4">
    <property type="entry name" value="SPERMIDINE_PUTRESCINE IMPORT ATP-BINDING PROTEIN POTA"/>
    <property type="match status" value="1"/>
</dbReference>
<dbReference type="Pfam" id="PF00005">
    <property type="entry name" value="ABC_tran"/>
    <property type="match status" value="1"/>
</dbReference>
<dbReference type="Pfam" id="PF08402">
    <property type="entry name" value="TOBE_2"/>
    <property type="match status" value="1"/>
</dbReference>
<dbReference type="SMART" id="SM00382">
    <property type="entry name" value="AAA"/>
    <property type="match status" value="1"/>
</dbReference>
<dbReference type="SUPFAM" id="SSF50331">
    <property type="entry name" value="MOP-like"/>
    <property type="match status" value="1"/>
</dbReference>
<dbReference type="SUPFAM" id="SSF52540">
    <property type="entry name" value="P-loop containing nucleoside triphosphate hydrolases"/>
    <property type="match status" value="1"/>
</dbReference>
<dbReference type="PROSITE" id="PS00211">
    <property type="entry name" value="ABC_TRANSPORTER_1"/>
    <property type="match status" value="1"/>
</dbReference>
<dbReference type="PROSITE" id="PS50893">
    <property type="entry name" value="ABC_TRANSPORTER_2"/>
    <property type="match status" value="1"/>
</dbReference>
<dbReference type="PROSITE" id="PS51305">
    <property type="entry name" value="POTA"/>
    <property type="match status" value="1"/>
</dbReference>
<organism>
    <name type="scientific">Clostridium acetobutylicum (strain ATCC 824 / DSM 792 / JCM 1419 / IAM 19013 / LMG 5710 / NBRC 13948 / NRRL B-527 / VKM B-1787 / 2291 / W)</name>
    <dbReference type="NCBI Taxonomy" id="272562"/>
    <lineage>
        <taxon>Bacteria</taxon>
        <taxon>Bacillati</taxon>
        <taxon>Bacillota</taxon>
        <taxon>Clostridia</taxon>
        <taxon>Eubacteriales</taxon>
        <taxon>Clostridiaceae</taxon>
        <taxon>Clostridium</taxon>
    </lineage>
</organism>
<proteinExistence type="inferred from homology"/>